<protein>
    <recommendedName>
        <fullName evidence="1">UPF0295 protein BAMEG_4067</fullName>
    </recommendedName>
</protein>
<proteinExistence type="inferred from homology"/>
<comment type="subcellular location">
    <subcellularLocation>
        <location evidence="1">Cell membrane</location>
        <topology evidence="1">Multi-pass membrane protein</topology>
    </subcellularLocation>
</comment>
<comment type="similarity">
    <text evidence="1">Belongs to the UPF0295 family.</text>
</comment>
<dbReference type="EMBL" id="CP001215">
    <property type="protein sequence ID" value="ACP15508.1"/>
    <property type="molecule type" value="Genomic_DNA"/>
</dbReference>
<dbReference type="RefSeq" id="WP_000025061.1">
    <property type="nucleotide sequence ID" value="NC_012581.1"/>
</dbReference>
<dbReference type="KEGG" id="bah:BAMEG_4067"/>
<dbReference type="HOGENOM" id="CLU_143991_0_0_9"/>
<dbReference type="GO" id="GO:0005886">
    <property type="term" value="C:plasma membrane"/>
    <property type="evidence" value="ECO:0007669"/>
    <property type="project" value="UniProtKB-SubCell"/>
</dbReference>
<dbReference type="HAMAP" id="MF_01502">
    <property type="entry name" value="UPF0295"/>
    <property type="match status" value="1"/>
</dbReference>
<dbReference type="InterPro" id="IPR020912">
    <property type="entry name" value="UPF0295"/>
</dbReference>
<dbReference type="NCBIfam" id="NF002796">
    <property type="entry name" value="PRK02935.1"/>
    <property type="match status" value="1"/>
</dbReference>
<dbReference type="Pfam" id="PF11023">
    <property type="entry name" value="DUF2614"/>
    <property type="match status" value="1"/>
</dbReference>
<sequence>MSIKYSNKINKIRTFALSLVFIGLFIAYLGVFFRENIIIMTTFMMVGFLAVIASTVVYFWIGMLSTKTVQIICPSCDKPTKMLGRVDACMHCNQPLTMDRDLEGKEFDEKYNKKSYKS</sequence>
<reference key="1">
    <citation type="submission" date="2008-10" db="EMBL/GenBank/DDBJ databases">
        <title>Genome sequence of Bacillus anthracis str. CDC 684.</title>
        <authorList>
            <person name="Dodson R.J."/>
            <person name="Munk A.C."/>
            <person name="Brettin T."/>
            <person name="Bruce D."/>
            <person name="Detter C."/>
            <person name="Tapia R."/>
            <person name="Han C."/>
            <person name="Sutton G."/>
            <person name="Sims D."/>
        </authorList>
    </citation>
    <scope>NUCLEOTIDE SEQUENCE [LARGE SCALE GENOMIC DNA]</scope>
    <source>
        <strain>CDC 684 / NRRL 3495</strain>
    </source>
</reference>
<organism>
    <name type="scientific">Bacillus anthracis (strain CDC 684 / NRRL 3495)</name>
    <dbReference type="NCBI Taxonomy" id="568206"/>
    <lineage>
        <taxon>Bacteria</taxon>
        <taxon>Bacillati</taxon>
        <taxon>Bacillota</taxon>
        <taxon>Bacilli</taxon>
        <taxon>Bacillales</taxon>
        <taxon>Bacillaceae</taxon>
        <taxon>Bacillus</taxon>
        <taxon>Bacillus cereus group</taxon>
    </lineage>
</organism>
<feature type="chain" id="PRO_1000185006" description="UPF0295 protein BAMEG_4067">
    <location>
        <begin position="1"/>
        <end position="118"/>
    </location>
</feature>
<feature type="transmembrane region" description="Helical" evidence="1">
    <location>
        <begin position="12"/>
        <end position="32"/>
    </location>
</feature>
<feature type="transmembrane region" description="Helical" evidence="1">
    <location>
        <begin position="43"/>
        <end position="63"/>
    </location>
</feature>
<evidence type="ECO:0000255" key="1">
    <source>
        <dbReference type="HAMAP-Rule" id="MF_01502"/>
    </source>
</evidence>
<gene>
    <name type="ordered locus">BAMEG_4067</name>
</gene>
<name>Y4067_BACAC</name>
<keyword id="KW-1003">Cell membrane</keyword>
<keyword id="KW-0472">Membrane</keyword>
<keyword id="KW-0812">Transmembrane</keyword>
<keyword id="KW-1133">Transmembrane helix</keyword>
<accession>C3LH93</accession>